<feature type="chain" id="PRO_0000414774" description="Cell division protein DivIB">
    <location>
        <begin position="1"/>
        <end position="284"/>
    </location>
</feature>
<feature type="topological domain" description="Cytoplasmic" evidence="1">
    <location>
        <begin position="1"/>
        <end position="56"/>
    </location>
</feature>
<feature type="transmembrane region" description="Helical" evidence="1">
    <location>
        <begin position="57"/>
        <end position="77"/>
    </location>
</feature>
<feature type="topological domain" description="Extracellular" evidence="1">
    <location>
        <begin position="78"/>
        <end position="284"/>
    </location>
</feature>
<feature type="domain" description="POTRA" evidence="2">
    <location>
        <begin position="79"/>
        <end position="150"/>
    </location>
</feature>
<feature type="region of interest" description="Disordered" evidence="3">
    <location>
        <begin position="1"/>
        <end position="38"/>
    </location>
</feature>
<feature type="compositionally biased region" description="Basic and acidic residues" evidence="3">
    <location>
        <begin position="1"/>
        <end position="10"/>
    </location>
</feature>
<comment type="function">
    <text evidence="1">Cell division protein that may be involved in stabilizing or promoting the assembly of the division complex.</text>
</comment>
<comment type="subcellular location">
    <subcellularLocation>
        <location evidence="1">Cell membrane</location>
        <topology evidence="1">Single-pass type II membrane protein</topology>
    </subcellularLocation>
    <text evidence="1">Localizes to the division septum.</text>
</comment>
<comment type="similarity">
    <text evidence="1">Belongs to the FtsQ/DivIB family. DivIB subfamily.</text>
</comment>
<comment type="sequence caution" evidence="4">
    <conflict type="erroneous initiation">
        <sequence resource="EMBL-CDS" id="BAI41758"/>
    </conflict>
    <text>Extended N-terminus.</text>
</comment>
<dbReference type="EMBL" id="AP011548">
    <property type="protein sequence ID" value="BAI41758.1"/>
    <property type="status" value="ALT_INIT"/>
    <property type="molecule type" value="Genomic_DNA"/>
</dbReference>
<dbReference type="EMBL" id="FM179322">
    <property type="protein sequence ID" value="CAR87179.1"/>
    <property type="molecule type" value="Genomic_DNA"/>
</dbReference>
<dbReference type="KEGG" id="lrg:LRHM_1231"/>
<dbReference type="KEGG" id="lrh:LGG_01284"/>
<dbReference type="PATRIC" id="fig|568703.30.peg.1278"/>
<dbReference type="HOGENOM" id="CLU_046278_0_0_9"/>
<dbReference type="Proteomes" id="UP000002067">
    <property type="component" value="Chromosome"/>
</dbReference>
<dbReference type="GO" id="GO:0032153">
    <property type="term" value="C:cell division site"/>
    <property type="evidence" value="ECO:0007669"/>
    <property type="project" value="UniProtKB-UniRule"/>
</dbReference>
<dbReference type="GO" id="GO:0005886">
    <property type="term" value="C:plasma membrane"/>
    <property type="evidence" value="ECO:0007669"/>
    <property type="project" value="UniProtKB-SubCell"/>
</dbReference>
<dbReference type="GO" id="GO:0043093">
    <property type="term" value="P:FtsZ-dependent cytokinesis"/>
    <property type="evidence" value="ECO:0007669"/>
    <property type="project" value="UniProtKB-UniRule"/>
</dbReference>
<dbReference type="Gene3D" id="3.40.50.10960">
    <property type="match status" value="1"/>
</dbReference>
<dbReference type="HAMAP" id="MF_00912">
    <property type="entry name" value="DivIB"/>
    <property type="match status" value="1"/>
</dbReference>
<dbReference type="InterPro" id="IPR026580">
    <property type="entry name" value="DivIB"/>
</dbReference>
<dbReference type="InterPro" id="IPR050487">
    <property type="entry name" value="FtsQ_DivIB"/>
</dbReference>
<dbReference type="InterPro" id="IPR034746">
    <property type="entry name" value="POTRA"/>
</dbReference>
<dbReference type="InterPro" id="IPR013685">
    <property type="entry name" value="POTRA_FtsQ_type"/>
</dbReference>
<dbReference type="PANTHER" id="PTHR37820">
    <property type="entry name" value="CELL DIVISION PROTEIN DIVIB"/>
    <property type="match status" value="1"/>
</dbReference>
<dbReference type="PANTHER" id="PTHR37820:SF1">
    <property type="entry name" value="CELL DIVISION PROTEIN FTSQ"/>
    <property type="match status" value="1"/>
</dbReference>
<dbReference type="Pfam" id="PF08478">
    <property type="entry name" value="POTRA_1"/>
    <property type="match status" value="1"/>
</dbReference>
<dbReference type="PROSITE" id="PS51779">
    <property type="entry name" value="POTRA"/>
    <property type="match status" value="1"/>
</dbReference>
<keyword id="KW-0131">Cell cycle</keyword>
<keyword id="KW-0132">Cell division</keyword>
<keyword id="KW-1003">Cell membrane</keyword>
<keyword id="KW-0472">Membrane</keyword>
<keyword id="KW-0812">Transmembrane</keyword>
<keyword id="KW-1133">Transmembrane helix</keyword>
<organism>
    <name type="scientific">Lacticaseibacillus rhamnosus (strain ATCC 53103 / LMG 18243 / GG)</name>
    <name type="common">Lactobacillus rhamnosus</name>
    <dbReference type="NCBI Taxonomy" id="568703"/>
    <lineage>
        <taxon>Bacteria</taxon>
        <taxon>Bacillati</taxon>
        <taxon>Bacillota</taxon>
        <taxon>Bacilli</taxon>
        <taxon>Lactobacillales</taxon>
        <taxon>Lactobacillaceae</taxon>
        <taxon>Lacticaseibacillus</taxon>
    </lineage>
</organism>
<proteinExistence type="inferred from homology"/>
<protein>
    <recommendedName>
        <fullName evidence="1">Cell division protein DivIB</fullName>
    </recommendedName>
</protein>
<sequence>MAWLRKKEQQSDPLTPWQQYQARQQQTPRHDRRQKPKLDVNLPKIQTLRRRKLVKNLVLILLPLLLLLGVFGYFASPLSKVGLVSVQGVTTVPDQQVINATKLSDDDLMLSVAFHKNAIAQRVQKSLPEIKTASLTIKGFNRIIIKTSEYQTVGYVYQKHAYHKILVTGEVLAAGTQTPVTTYPVFSGFTAKELPQMITLLKQFPAAIRRDISEIDASRGDANPNQIALNMNDGYRIIADTRTIAKKIKYYPAIVSQVKQKGVVDLEVGAFWRPYSSSEKSSND</sequence>
<name>DIVIB_LACRG</name>
<gene>
    <name evidence="1" type="primary">divIB</name>
    <name type="synonym">ftsQ</name>
    <name type="ordered locus">LRHM_1231</name>
    <name type="ordered locus">LGG_01284</name>
</gene>
<accession>C7TC36</accession>
<accession>C8UTQ4</accession>
<reference key="1">
    <citation type="journal article" date="2009" name="J. Bacteriol.">
        <title>Complete genome sequence of the probiotic Lactobacillus rhamnosus ATCC 53103.</title>
        <authorList>
            <person name="Morita H."/>
            <person name="Toh H."/>
            <person name="Oshima K."/>
            <person name="Murakami M."/>
            <person name="Taylor T.D."/>
            <person name="Igimi S."/>
            <person name="Hattori M."/>
        </authorList>
    </citation>
    <scope>NUCLEOTIDE SEQUENCE [LARGE SCALE GENOMIC DNA]</scope>
    <source>
        <strain>ATCC 53103 / LMG 18243 / GG</strain>
    </source>
</reference>
<reference key="2">
    <citation type="journal article" date="2009" name="Proc. Natl. Acad. Sci. U.S.A.">
        <title>Comparative genomic analysis of Lactobacillus rhamnosus GG reveals pili containing a human- mucus binding protein.</title>
        <authorList>
            <person name="Kankainen M."/>
            <person name="Paulin L."/>
            <person name="Tynkkynen S."/>
            <person name="von Ossowski I."/>
            <person name="Reunanen J."/>
            <person name="Partanen P."/>
            <person name="Satokari R."/>
            <person name="Vesterlund S."/>
            <person name="Hendrickx A.P."/>
            <person name="Lebeer S."/>
            <person name="De Keersmaecker S.C."/>
            <person name="Vanderleyden J."/>
            <person name="Hamalainen T."/>
            <person name="Laukkanen S."/>
            <person name="Salovuori N."/>
            <person name="Ritari J."/>
            <person name="Alatalo E."/>
            <person name="Korpela R."/>
            <person name="Mattila-Sandholm T."/>
            <person name="Lassig A."/>
            <person name="Hatakka K."/>
            <person name="Kinnunen K.T."/>
            <person name="Karjalainen H."/>
            <person name="Saxelin M."/>
            <person name="Laakso K."/>
            <person name="Surakka A."/>
            <person name="Palva A."/>
            <person name="Salusjarvi T."/>
            <person name="Auvinen P."/>
            <person name="de Vos W.M."/>
        </authorList>
    </citation>
    <scope>NUCLEOTIDE SEQUENCE [LARGE SCALE GENOMIC DNA]</scope>
    <source>
        <strain>ATCC 53103 / LMG 18243 / GG</strain>
    </source>
</reference>
<evidence type="ECO:0000255" key="1">
    <source>
        <dbReference type="HAMAP-Rule" id="MF_00912"/>
    </source>
</evidence>
<evidence type="ECO:0000255" key="2">
    <source>
        <dbReference type="PROSITE-ProRule" id="PRU01115"/>
    </source>
</evidence>
<evidence type="ECO:0000256" key="3">
    <source>
        <dbReference type="SAM" id="MobiDB-lite"/>
    </source>
</evidence>
<evidence type="ECO:0000305" key="4"/>